<dbReference type="EC" id="2.4.2.8" evidence="1"/>
<dbReference type="EMBL" id="CP002792">
    <property type="protein sequence ID" value="AEH07197.1"/>
    <property type="molecule type" value="Genomic_DNA"/>
</dbReference>
<dbReference type="RefSeq" id="WP_013867380.1">
    <property type="nucleotide sequence ID" value="NC_015636.1"/>
</dbReference>
<dbReference type="SMR" id="F8AJL1"/>
<dbReference type="STRING" id="647113.Metok_1229"/>
<dbReference type="GeneID" id="10773385"/>
<dbReference type="KEGG" id="mok:Metok_1229"/>
<dbReference type="eggNOG" id="arCOG00030">
    <property type="taxonomic scope" value="Archaea"/>
</dbReference>
<dbReference type="HOGENOM" id="CLU_126376_0_0_2"/>
<dbReference type="OrthoDB" id="8323at2157"/>
<dbReference type="UniPathway" id="UPA00591">
    <property type="reaction ID" value="UER00648"/>
</dbReference>
<dbReference type="Proteomes" id="UP000009296">
    <property type="component" value="Chromosome"/>
</dbReference>
<dbReference type="GO" id="GO:0005737">
    <property type="term" value="C:cytoplasm"/>
    <property type="evidence" value="ECO:0007669"/>
    <property type="project" value="UniProtKB-SubCell"/>
</dbReference>
<dbReference type="GO" id="GO:0052657">
    <property type="term" value="F:guanine phosphoribosyltransferase activity"/>
    <property type="evidence" value="ECO:0007669"/>
    <property type="project" value="RHEA"/>
</dbReference>
<dbReference type="GO" id="GO:0004422">
    <property type="term" value="F:hypoxanthine phosphoribosyltransferase activity"/>
    <property type="evidence" value="ECO:0007669"/>
    <property type="project" value="UniProtKB-UniRule"/>
</dbReference>
<dbReference type="GO" id="GO:0032264">
    <property type="term" value="P:IMP salvage"/>
    <property type="evidence" value="ECO:0007669"/>
    <property type="project" value="UniProtKB-UniRule"/>
</dbReference>
<dbReference type="GO" id="GO:0006166">
    <property type="term" value="P:purine ribonucleoside salvage"/>
    <property type="evidence" value="ECO:0007669"/>
    <property type="project" value="UniProtKB-KW"/>
</dbReference>
<dbReference type="CDD" id="cd06223">
    <property type="entry name" value="PRTases_typeI"/>
    <property type="match status" value="1"/>
</dbReference>
<dbReference type="Gene3D" id="3.40.50.2020">
    <property type="match status" value="1"/>
</dbReference>
<dbReference type="HAMAP" id="MF_01467">
    <property type="entry name" value="Hypx_phosphoribosyltr"/>
    <property type="match status" value="1"/>
</dbReference>
<dbReference type="InterPro" id="IPR026597">
    <property type="entry name" value="HGPRTase-like"/>
</dbReference>
<dbReference type="InterPro" id="IPR000836">
    <property type="entry name" value="PRibTrfase_dom"/>
</dbReference>
<dbReference type="InterPro" id="IPR029057">
    <property type="entry name" value="PRTase-like"/>
</dbReference>
<dbReference type="InterPro" id="IPR050118">
    <property type="entry name" value="Pur/Pyrimidine_PRTase"/>
</dbReference>
<dbReference type="NCBIfam" id="NF040646">
    <property type="entry name" value="HPT_Archaea"/>
    <property type="match status" value="1"/>
</dbReference>
<dbReference type="NCBIfam" id="NF002635">
    <property type="entry name" value="PRK02304.1-4"/>
    <property type="match status" value="1"/>
</dbReference>
<dbReference type="PANTHER" id="PTHR43864">
    <property type="entry name" value="HYPOXANTHINE/GUANINE PHOSPHORIBOSYLTRANSFERASE"/>
    <property type="match status" value="1"/>
</dbReference>
<dbReference type="PANTHER" id="PTHR43864:SF1">
    <property type="entry name" value="XANTHINE PHOSPHORIBOSYLTRANSFERASE"/>
    <property type="match status" value="1"/>
</dbReference>
<dbReference type="Pfam" id="PF00156">
    <property type="entry name" value="Pribosyltran"/>
    <property type="match status" value="1"/>
</dbReference>
<dbReference type="SUPFAM" id="SSF53271">
    <property type="entry name" value="PRTase-like"/>
    <property type="match status" value="1"/>
</dbReference>
<dbReference type="PROSITE" id="PS00103">
    <property type="entry name" value="PUR_PYR_PR_TRANSFER"/>
    <property type="match status" value="1"/>
</dbReference>
<gene>
    <name evidence="1" type="primary">hpt</name>
    <name type="ordered locus">Metok_1229</name>
</gene>
<name>HPRT_METOI</name>
<keyword id="KW-0963">Cytoplasm</keyword>
<keyword id="KW-0328">Glycosyltransferase</keyword>
<keyword id="KW-0660">Purine salvage</keyword>
<keyword id="KW-0808">Transferase</keyword>
<evidence type="ECO:0000255" key="1">
    <source>
        <dbReference type="HAMAP-Rule" id="MF_01467"/>
    </source>
</evidence>
<accession>F8AJL1</accession>
<proteinExistence type="inferred from homology"/>
<reference key="1">
    <citation type="submission" date="2011-05" db="EMBL/GenBank/DDBJ databases">
        <title>Complete sequence of chromosome of Methanothermococcus okinawensis IH1.</title>
        <authorList>
            <person name="Lucas S."/>
            <person name="Han J."/>
            <person name="Lapidus A."/>
            <person name="Cheng J.-F."/>
            <person name="Goodwin L."/>
            <person name="Pitluck S."/>
            <person name="Peters L."/>
            <person name="Mikhailova N."/>
            <person name="Held B."/>
            <person name="Han C."/>
            <person name="Tapia R."/>
            <person name="Land M."/>
            <person name="Hauser L."/>
            <person name="Kyrpides N."/>
            <person name="Ivanova N."/>
            <person name="Pagani I."/>
            <person name="Sieprawska-Lupa M."/>
            <person name="Takai K."/>
            <person name="Miyazaki J."/>
            <person name="Whitman W."/>
            <person name="Woyke T."/>
        </authorList>
    </citation>
    <scope>NUCLEOTIDE SEQUENCE [LARGE SCALE GENOMIC DNA]</scope>
    <source>
        <strain>DSM 14208 / JCM 11175 / IH1</strain>
    </source>
</reference>
<organism>
    <name type="scientific">Methanothermococcus okinawensis (strain DSM 14208 / JCM 11175 / IH1)</name>
    <dbReference type="NCBI Taxonomy" id="647113"/>
    <lineage>
        <taxon>Archaea</taxon>
        <taxon>Methanobacteriati</taxon>
        <taxon>Methanobacteriota</taxon>
        <taxon>Methanomada group</taxon>
        <taxon>Methanococci</taxon>
        <taxon>Methanococcales</taxon>
        <taxon>Methanococcaceae</taxon>
        <taxon>Methanothermococcus</taxon>
    </lineage>
</organism>
<sequence length="183" mass="20232">MNLLEDTLKSCPIVKRGEYNYFIHPITDGVPLMNSQLLREVATKIIKISDMDIDKIVTAEAMGIPIATTISLYTDIPYVIMRKRKYLLEGEIPVHQETGYSKGELYLNGVNKGDKVLIVDDVISTGGTMVAIIKALEKAGAHIKDIVCVIERGNGKEEVKEKTGYDVKTLVKIDVVNGKVVIL</sequence>
<comment type="function">
    <text evidence="1">Catalyzes a salvage reaction resulting in the formation of IMP that is energically less costly than de novo synthesis.</text>
</comment>
<comment type="catalytic activity">
    <reaction evidence="1">
        <text>IMP + diphosphate = hypoxanthine + 5-phospho-alpha-D-ribose 1-diphosphate</text>
        <dbReference type="Rhea" id="RHEA:17973"/>
        <dbReference type="ChEBI" id="CHEBI:17368"/>
        <dbReference type="ChEBI" id="CHEBI:33019"/>
        <dbReference type="ChEBI" id="CHEBI:58017"/>
        <dbReference type="ChEBI" id="CHEBI:58053"/>
        <dbReference type="EC" id="2.4.2.8"/>
    </reaction>
</comment>
<comment type="catalytic activity">
    <reaction evidence="1">
        <text>GMP + diphosphate = guanine + 5-phospho-alpha-D-ribose 1-diphosphate</text>
        <dbReference type="Rhea" id="RHEA:25424"/>
        <dbReference type="ChEBI" id="CHEBI:16235"/>
        <dbReference type="ChEBI" id="CHEBI:33019"/>
        <dbReference type="ChEBI" id="CHEBI:58017"/>
        <dbReference type="ChEBI" id="CHEBI:58115"/>
        <dbReference type="EC" id="2.4.2.8"/>
    </reaction>
</comment>
<comment type="pathway">
    <text evidence="1">Purine metabolism; IMP biosynthesis via salvage pathway; IMP from hypoxanthine: step 1/1.</text>
</comment>
<comment type="subunit">
    <text evidence="1">Homodimer.</text>
</comment>
<comment type="subcellular location">
    <subcellularLocation>
        <location evidence="1">Cytoplasm</location>
    </subcellularLocation>
</comment>
<comment type="similarity">
    <text evidence="1">Belongs to the purine/pyrimidine phosphoribosyltransferase family. Archaeal HPRT subfamily.</text>
</comment>
<protein>
    <recommendedName>
        <fullName evidence="1">Hypoxanthine/guanine phosphoribosyltransferase</fullName>
        <shortName evidence="1">HGPRTase</shortName>
        <ecNumber evidence="1">2.4.2.8</ecNumber>
    </recommendedName>
</protein>
<feature type="chain" id="PRO_0000415485" description="Hypoxanthine/guanine phosphoribosyltransferase">
    <location>
        <begin position="1"/>
        <end position="183"/>
    </location>
</feature>